<sequence>MSKLWGGRFTEEAEAWVEEFGASISFDQQLVNQDINGSIAHVTMLAKQGIVTKEEAEKIKIGLQYLLEEAKQNKLHFSVEAEDIHLNIEKMLMEKIGEVGGKLHTGRSRNDQVATDMHLYLKEKVEHIIKAIKQLQTVLVHQAENNIETIMPGYTHLQRAQPISFAHHILAYFWMLERDVNRYEDSLKRINISPLGAGALAGTTFPIDREYSAELLGFNGIYENSLDAVSDRDFILEFLSNSSMLMMHLSRFCEELILWSSQEFQFIEMSDQYATGSSIMPQKKNPDMAELIRGKTGRVYGNLFSLLTVMKGLPLAYNKDLQEDKEGMFDTVKTVEGCLHIMAGMLETMTVNKEKMGQAVTQDFSNATEIADYLANKGLPFRQAHEIVGKLVLHCTQKGIYLIDVPLATYKEMSALFEEDLYEVLSPYAAVKRRNSAGGTGFEQIEKALEKAKGLTKEAIKN</sequence>
<proteinExistence type="inferred from homology"/>
<keyword id="KW-0028">Amino-acid biosynthesis</keyword>
<keyword id="KW-0055">Arginine biosynthesis</keyword>
<keyword id="KW-0963">Cytoplasm</keyword>
<keyword id="KW-0456">Lyase</keyword>
<keyword id="KW-1185">Reference proteome</keyword>
<organism>
    <name type="scientific">Bacillus anthracis</name>
    <dbReference type="NCBI Taxonomy" id="1392"/>
    <lineage>
        <taxon>Bacteria</taxon>
        <taxon>Bacillati</taxon>
        <taxon>Bacillota</taxon>
        <taxon>Bacilli</taxon>
        <taxon>Bacillales</taxon>
        <taxon>Bacillaceae</taxon>
        <taxon>Bacillus</taxon>
        <taxon>Bacillus cereus group</taxon>
    </lineage>
</organism>
<evidence type="ECO:0000255" key="1">
    <source>
        <dbReference type="HAMAP-Rule" id="MF_00006"/>
    </source>
</evidence>
<name>ARLY_BACAN</name>
<comment type="catalytic activity">
    <reaction evidence="1">
        <text>2-(N(omega)-L-arginino)succinate = fumarate + L-arginine</text>
        <dbReference type="Rhea" id="RHEA:24020"/>
        <dbReference type="ChEBI" id="CHEBI:29806"/>
        <dbReference type="ChEBI" id="CHEBI:32682"/>
        <dbReference type="ChEBI" id="CHEBI:57472"/>
        <dbReference type="EC" id="4.3.2.1"/>
    </reaction>
</comment>
<comment type="pathway">
    <text evidence="1">Amino-acid biosynthesis; L-arginine biosynthesis; L-arginine from L-ornithine and carbamoyl phosphate: step 3/3.</text>
</comment>
<comment type="subcellular location">
    <subcellularLocation>
        <location evidence="1">Cytoplasm</location>
    </subcellularLocation>
</comment>
<comment type="similarity">
    <text evidence="1">Belongs to the lyase 1 family. Argininosuccinate lyase subfamily.</text>
</comment>
<gene>
    <name evidence="1" type="primary">argH-2</name>
    <name type="ordered locus">BA_4879</name>
    <name type="ordered locus">GBAA_4879</name>
    <name type="ordered locus">BAS4527</name>
</gene>
<dbReference type="EC" id="4.3.2.1" evidence="1"/>
<dbReference type="EMBL" id="AE016879">
    <property type="protein sequence ID" value="AAP28566.1"/>
    <property type="molecule type" value="Genomic_DNA"/>
</dbReference>
<dbReference type="EMBL" id="AE017334">
    <property type="protein sequence ID" value="AAT33996.1"/>
    <property type="molecule type" value="Genomic_DNA"/>
</dbReference>
<dbReference type="EMBL" id="AE017225">
    <property type="protein sequence ID" value="AAT56824.1"/>
    <property type="molecule type" value="Genomic_DNA"/>
</dbReference>
<dbReference type="RefSeq" id="NP_847080.1">
    <property type="nucleotide sequence ID" value="NC_003997.3"/>
</dbReference>
<dbReference type="RefSeq" id="YP_030774.1">
    <property type="nucleotide sequence ID" value="NC_005945.1"/>
</dbReference>
<dbReference type="SMR" id="Q81KV8"/>
<dbReference type="STRING" id="261594.GBAA_4879"/>
<dbReference type="DNASU" id="1085916"/>
<dbReference type="GeneID" id="45024502"/>
<dbReference type="KEGG" id="ban:BA_4879"/>
<dbReference type="KEGG" id="banh:HYU01_23775"/>
<dbReference type="KEGG" id="bar:GBAA_4879"/>
<dbReference type="KEGG" id="bat:BAS4527"/>
<dbReference type="PATRIC" id="fig|198094.11.peg.4839"/>
<dbReference type="eggNOG" id="COG0165">
    <property type="taxonomic scope" value="Bacteria"/>
</dbReference>
<dbReference type="HOGENOM" id="CLU_027272_2_3_9"/>
<dbReference type="OMA" id="DFAIEFC"/>
<dbReference type="OrthoDB" id="9769623at2"/>
<dbReference type="UniPathway" id="UPA00068">
    <property type="reaction ID" value="UER00114"/>
</dbReference>
<dbReference type="Proteomes" id="UP000000427">
    <property type="component" value="Chromosome"/>
</dbReference>
<dbReference type="Proteomes" id="UP000000594">
    <property type="component" value="Chromosome"/>
</dbReference>
<dbReference type="GO" id="GO:0005829">
    <property type="term" value="C:cytosol"/>
    <property type="evidence" value="ECO:0007669"/>
    <property type="project" value="TreeGrafter"/>
</dbReference>
<dbReference type="GO" id="GO:0004056">
    <property type="term" value="F:argininosuccinate lyase activity"/>
    <property type="evidence" value="ECO:0007669"/>
    <property type="project" value="UniProtKB-UniRule"/>
</dbReference>
<dbReference type="GO" id="GO:0042450">
    <property type="term" value="P:arginine biosynthetic process via ornithine"/>
    <property type="evidence" value="ECO:0007669"/>
    <property type="project" value="InterPro"/>
</dbReference>
<dbReference type="GO" id="GO:0006526">
    <property type="term" value="P:L-arginine biosynthetic process"/>
    <property type="evidence" value="ECO:0007669"/>
    <property type="project" value="UniProtKB-UniRule"/>
</dbReference>
<dbReference type="CDD" id="cd01359">
    <property type="entry name" value="Argininosuccinate_lyase"/>
    <property type="match status" value="1"/>
</dbReference>
<dbReference type="FunFam" id="1.10.275.10:FF:000002">
    <property type="entry name" value="Argininosuccinate lyase"/>
    <property type="match status" value="1"/>
</dbReference>
<dbReference type="FunFam" id="1.10.40.30:FF:000001">
    <property type="entry name" value="Argininosuccinate lyase"/>
    <property type="match status" value="1"/>
</dbReference>
<dbReference type="FunFam" id="1.20.200.10:FF:000006">
    <property type="entry name" value="Argininosuccinate lyase"/>
    <property type="match status" value="1"/>
</dbReference>
<dbReference type="Gene3D" id="1.10.40.30">
    <property type="entry name" value="Fumarase/aspartase (C-terminal domain)"/>
    <property type="match status" value="1"/>
</dbReference>
<dbReference type="Gene3D" id="1.20.200.10">
    <property type="entry name" value="Fumarase/aspartase (Central domain)"/>
    <property type="match status" value="1"/>
</dbReference>
<dbReference type="Gene3D" id="1.10.275.10">
    <property type="entry name" value="Fumarase/aspartase (N-terminal domain)"/>
    <property type="match status" value="1"/>
</dbReference>
<dbReference type="HAMAP" id="MF_00006">
    <property type="entry name" value="Arg_succ_lyase"/>
    <property type="match status" value="1"/>
</dbReference>
<dbReference type="InterPro" id="IPR029419">
    <property type="entry name" value="Arg_succ_lyase_C"/>
</dbReference>
<dbReference type="InterPro" id="IPR009049">
    <property type="entry name" value="Argininosuccinate_lyase"/>
</dbReference>
<dbReference type="InterPro" id="IPR024083">
    <property type="entry name" value="Fumarase/histidase_N"/>
</dbReference>
<dbReference type="InterPro" id="IPR020557">
    <property type="entry name" value="Fumarate_lyase_CS"/>
</dbReference>
<dbReference type="InterPro" id="IPR000362">
    <property type="entry name" value="Fumarate_lyase_fam"/>
</dbReference>
<dbReference type="InterPro" id="IPR022761">
    <property type="entry name" value="Fumarate_lyase_N"/>
</dbReference>
<dbReference type="InterPro" id="IPR008948">
    <property type="entry name" value="L-Aspartase-like"/>
</dbReference>
<dbReference type="NCBIfam" id="TIGR00838">
    <property type="entry name" value="argH"/>
    <property type="match status" value="1"/>
</dbReference>
<dbReference type="PANTHER" id="PTHR43814">
    <property type="entry name" value="ARGININOSUCCINATE LYASE"/>
    <property type="match status" value="1"/>
</dbReference>
<dbReference type="PANTHER" id="PTHR43814:SF1">
    <property type="entry name" value="ARGININOSUCCINATE LYASE"/>
    <property type="match status" value="1"/>
</dbReference>
<dbReference type="Pfam" id="PF14698">
    <property type="entry name" value="ASL_C2"/>
    <property type="match status" value="1"/>
</dbReference>
<dbReference type="Pfam" id="PF00206">
    <property type="entry name" value="Lyase_1"/>
    <property type="match status" value="1"/>
</dbReference>
<dbReference type="PRINTS" id="PR00145">
    <property type="entry name" value="ARGSUCLYASE"/>
</dbReference>
<dbReference type="PRINTS" id="PR00149">
    <property type="entry name" value="FUMRATELYASE"/>
</dbReference>
<dbReference type="SUPFAM" id="SSF48557">
    <property type="entry name" value="L-aspartase-like"/>
    <property type="match status" value="1"/>
</dbReference>
<dbReference type="PROSITE" id="PS00163">
    <property type="entry name" value="FUMARATE_LYASES"/>
    <property type="match status" value="1"/>
</dbReference>
<accession>Q81KV8</accession>
<accession>Q6HSB4</accession>
<accession>Q6KLL0</accession>
<reference key="1">
    <citation type="journal article" date="2003" name="Nature">
        <title>The genome sequence of Bacillus anthracis Ames and comparison to closely related bacteria.</title>
        <authorList>
            <person name="Read T.D."/>
            <person name="Peterson S.N."/>
            <person name="Tourasse N.J."/>
            <person name="Baillie L.W."/>
            <person name="Paulsen I.T."/>
            <person name="Nelson K.E."/>
            <person name="Tettelin H."/>
            <person name="Fouts D.E."/>
            <person name="Eisen J.A."/>
            <person name="Gill S.R."/>
            <person name="Holtzapple E.K."/>
            <person name="Okstad O.A."/>
            <person name="Helgason E."/>
            <person name="Rilstone J."/>
            <person name="Wu M."/>
            <person name="Kolonay J.F."/>
            <person name="Beanan M.J."/>
            <person name="Dodson R.J."/>
            <person name="Brinkac L.M."/>
            <person name="Gwinn M.L."/>
            <person name="DeBoy R.T."/>
            <person name="Madpu R."/>
            <person name="Daugherty S.C."/>
            <person name="Durkin A.S."/>
            <person name="Haft D.H."/>
            <person name="Nelson W.C."/>
            <person name="Peterson J.D."/>
            <person name="Pop M."/>
            <person name="Khouri H.M."/>
            <person name="Radune D."/>
            <person name="Benton J.L."/>
            <person name="Mahamoud Y."/>
            <person name="Jiang L."/>
            <person name="Hance I.R."/>
            <person name="Weidman J.F."/>
            <person name="Berry K.J."/>
            <person name="Plaut R.D."/>
            <person name="Wolf A.M."/>
            <person name="Watkins K.L."/>
            <person name="Nierman W.C."/>
            <person name="Hazen A."/>
            <person name="Cline R.T."/>
            <person name="Redmond C."/>
            <person name="Thwaite J.E."/>
            <person name="White O."/>
            <person name="Salzberg S.L."/>
            <person name="Thomason B."/>
            <person name="Friedlander A.M."/>
            <person name="Koehler T.M."/>
            <person name="Hanna P.C."/>
            <person name="Kolstoe A.-B."/>
            <person name="Fraser C.M."/>
        </authorList>
    </citation>
    <scope>NUCLEOTIDE SEQUENCE [LARGE SCALE GENOMIC DNA]</scope>
    <source>
        <strain>Ames / isolate Porton</strain>
    </source>
</reference>
<reference key="2">
    <citation type="journal article" date="2009" name="J. Bacteriol.">
        <title>The complete genome sequence of Bacillus anthracis Ames 'Ancestor'.</title>
        <authorList>
            <person name="Ravel J."/>
            <person name="Jiang L."/>
            <person name="Stanley S.T."/>
            <person name="Wilson M.R."/>
            <person name="Decker R.S."/>
            <person name="Read T.D."/>
            <person name="Worsham P."/>
            <person name="Keim P.S."/>
            <person name="Salzberg S.L."/>
            <person name="Fraser-Liggett C.M."/>
            <person name="Rasko D.A."/>
        </authorList>
    </citation>
    <scope>NUCLEOTIDE SEQUENCE [LARGE SCALE GENOMIC DNA]</scope>
    <source>
        <strain>Ames ancestor</strain>
    </source>
</reference>
<reference key="3">
    <citation type="submission" date="2004-01" db="EMBL/GenBank/DDBJ databases">
        <title>Complete genome sequence of Bacillus anthracis Sterne.</title>
        <authorList>
            <person name="Brettin T.S."/>
            <person name="Bruce D."/>
            <person name="Challacombe J.F."/>
            <person name="Gilna P."/>
            <person name="Han C."/>
            <person name="Hill K."/>
            <person name="Hitchcock P."/>
            <person name="Jackson P."/>
            <person name="Keim P."/>
            <person name="Longmire J."/>
            <person name="Lucas S."/>
            <person name="Okinaka R."/>
            <person name="Richardson P."/>
            <person name="Rubin E."/>
            <person name="Tice H."/>
        </authorList>
    </citation>
    <scope>NUCLEOTIDE SEQUENCE [LARGE SCALE GENOMIC DNA]</scope>
    <source>
        <strain>Sterne</strain>
    </source>
</reference>
<protein>
    <recommendedName>
        <fullName evidence="1">Argininosuccinate lyase</fullName>
        <shortName evidence="1">ASAL</shortName>
        <ecNumber evidence="1">4.3.2.1</ecNumber>
    </recommendedName>
    <alternativeName>
        <fullName evidence="1">Arginosuccinase</fullName>
    </alternativeName>
</protein>
<feature type="chain" id="PRO_0000137734" description="Argininosuccinate lyase">
    <location>
        <begin position="1"/>
        <end position="462"/>
    </location>
</feature>